<dbReference type="EMBL" id="K02458">
    <property type="protein sequence ID" value="AAA27762.1"/>
    <property type="molecule type" value="mRNA"/>
</dbReference>
<dbReference type="PIR" id="A41193">
    <property type="entry name" value="A41193"/>
</dbReference>
<dbReference type="RefSeq" id="NP_001191479.1">
    <property type="nucleotide sequence ID" value="NM_001204550.1"/>
</dbReference>
<dbReference type="SMR" id="P06518"/>
<dbReference type="EnsemblMetazoa" id="NM_001204550.1">
    <property type="protein sequence ID" value="NP_001191479.1"/>
    <property type="gene ID" value="LOC100533237"/>
</dbReference>
<dbReference type="GeneID" id="100533237"/>
<dbReference type="OrthoDB" id="6159666at2759"/>
<dbReference type="Proteomes" id="UP000694888">
    <property type="component" value="Unplaced"/>
</dbReference>
<dbReference type="GO" id="GO:0005576">
    <property type="term" value="C:extracellular region"/>
    <property type="evidence" value="ECO:0007669"/>
    <property type="project" value="UniProtKB-SubCell"/>
</dbReference>
<dbReference type="GO" id="GO:0007218">
    <property type="term" value="P:neuropeptide signaling pathway"/>
    <property type="evidence" value="ECO:0007669"/>
    <property type="project" value="UniProtKB-KW"/>
</dbReference>
<sequence length="151" mass="16977">MPCTPNSHRLLLVTALCLLITSLFAQQKRRPRIDCTRFVFAPACRGVSAKRALDPRAVTLDENVAPSFSDLDDEILRSFLAYNRHKQQEQAAPRPDAPSSLLRLVAQRGLRHRTPHSLHRPVPWSVEQSFLKTGSDGALSWPNSIKSLQED</sequence>
<name>AGN1_APLCA</name>
<protein>
    <recommendedName>
        <fullName>Abdominal ganglion neuropeptide L11</fullName>
    </recommendedName>
</protein>
<organism>
    <name type="scientific">Aplysia californica</name>
    <name type="common">California sea hare</name>
    <dbReference type="NCBI Taxonomy" id="6500"/>
    <lineage>
        <taxon>Eukaryota</taxon>
        <taxon>Metazoa</taxon>
        <taxon>Spiralia</taxon>
        <taxon>Lophotrochozoa</taxon>
        <taxon>Mollusca</taxon>
        <taxon>Gastropoda</taxon>
        <taxon>Heterobranchia</taxon>
        <taxon>Euthyneura</taxon>
        <taxon>Tectipleura</taxon>
        <taxon>Aplysiida</taxon>
        <taxon>Aplysioidea</taxon>
        <taxon>Aplysiidae</taxon>
        <taxon>Aplysia</taxon>
    </lineage>
</organism>
<evidence type="ECO:0000255" key="1"/>
<comment type="subcellular location">
    <subcellularLocation>
        <location>Secreted</location>
    </subcellularLocation>
</comment>
<feature type="signal peptide" evidence="1">
    <location>
        <begin position="1"/>
        <end position="25"/>
    </location>
</feature>
<feature type="chain" id="PRO_0000001781" description="Abdominal ganglion neuropeptide L11">
    <location>
        <begin position="26"/>
        <end position="151"/>
    </location>
</feature>
<keyword id="KW-0165">Cleavage on pair of basic residues</keyword>
<keyword id="KW-0527">Neuropeptide</keyword>
<keyword id="KW-0964">Secreted</keyword>
<keyword id="KW-0732">Signal</keyword>
<reference key="1">
    <citation type="journal article" date="1984" name="Proc. Natl. Acad. Sci. U.S.A.">
        <title>A cDNA clone encoding neuropeptides isolated from Aplysia neuron L11.</title>
        <authorList>
            <person name="Taussig R."/>
            <person name="Kaldany R.-R."/>
            <person name="Scheller R.H."/>
        </authorList>
    </citation>
    <scope>NUCLEOTIDE SEQUENCE [MRNA]</scope>
</reference>
<accession>P06518</accession>
<proteinExistence type="evidence at transcript level"/>